<proteinExistence type="inferred from homology"/>
<keyword id="KW-0029">Amino-acid transport</keyword>
<keyword id="KW-0067">ATP-binding</keyword>
<keyword id="KW-0997">Cell inner membrane</keyword>
<keyword id="KW-1003">Cell membrane</keyword>
<keyword id="KW-0472">Membrane</keyword>
<keyword id="KW-0547">Nucleotide-binding</keyword>
<keyword id="KW-1278">Translocase</keyword>
<keyword id="KW-0813">Transport</keyword>
<feature type="chain" id="PRO_0000270365" description="Methionine import ATP-binding protein MetN">
    <location>
        <begin position="1"/>
        <end position="365"/>
    </location>
</feature>
<feature type="domain" description="ABC transporter" evidence="1">
    <location>
        <begin position="26"/>
        <end position="261"/>
    </location>
</feature>
<feature type="binding site" evidence="1">
    <location>
        <begin position="58"/>
        <end position="65"/>
    </location>
    <ligand>
        <name>ATP</name>
        <dbReference type="ChEBI" id="CHEBI:30616"/>
    </ligand>
</feature>
<organism>
    <name type="scientific">Mesorhizobium japonicum (strain LMG 29417 / CECT 9101 / MAFF 303099)</name>
    <name type="common">Mesorhizobium loti (strain MAFF 303099)</name>
    <dbReference type="NCBI Taxonomy" id="266835"/>
    <lineage>
        <taxon>Bacteria</taxon>
        <taxon>Pseudomonadati</taxon>
        <taxon>Pseudomonadota</taxon>
        <taxon>Alphaproteobacteria</taxon>
        <taxon>Hyphomicrobiales</taxon>
        <taxon>Phyllobacteriaceae</taxon>
        <taxon>Mesorhizobium</taxon>
    </lineage>
</organism>
<gene>
    <name evidence="1" type="primary">metN</name>
    <name type="ordered locus">mll4792</name>
</gene>
<accession>Q98DA2</accession>
<dbReference type="EC" id="7.4.2.11" evidence="1"/>
<dbReference type="EMBL" id="BA000012">
    <property type="protein sequence ID" value="BAB51369.1"/>
    <property type="molecule type" value="Genomic_DNA"/>
</dbReference>
<dbReference type="RefSeq" id="WP_010912711.1">
    <property type="nucleotide sequence ID" value="NC_002678.2"/>
</dbReference>
<dbReference type="SMR" id="Q98DA2"/>
<dbReference type="KEGG" id="mlo:mll4792"/>
<dbReference type="PATRIC" id="fig|266835.9.peg.3785"/>
<dbReference type="eggNOG" id="COG1135">
    <property type="taxonomic scope" value="Bacteria"/>
</dbReference>
<dbReference type="HOGENOM" id="CLU_000604_1_3_5"/>
<dbReference type="Proteomes" id="UP000000552">
    <property type="component" value="Chromosome"/>
</dbReference>
<dbReference type="GO" id="GO:0005886">
    <property type="term" value="C:plasma membrane"/>
    <property type="evidence" value="ECO:0007669"/>
    <property type="project" value="UniProtKB-SubCell"/>
</dbReference>
<dbReference type="GO" id="GO:0033232">
    <property type="term" value="F:ABC-type D-methionine transporter activity"/>
    <property type="evidence" value="ECO:0007669"/>
    <property type="project" value="UniProtKB-EC"/>
</dbReference>
<dbReference type="GO" id="GO:0005524">
    <property type="term" value="F:ATP binding"/>
    <property type="evidence" value="ECO:0007669"/>
    <property type="project" value="UniProtKB-KW"/>
</dbReference>
<dbReference type="GO" id="GO:0016887">
    <property type="term" value="F:ATP hydrolysis activity"/>
    <property type="evidence" value="ECO:0007669"/>
    <property type="project" value="InterPro"/>
</dbReference>
<dbReference type="CDD" id="cd03258">
    <property type="entry name" value="ABC_MetN_methionine_transporter"/>
    <property type="match status" value="1"/>
</dbReference>
<dbReference type="FunFam" id="3.40.50.300:FF:000056">
    <property type="entry name" value="Cell division ATP-binding protein FtsE"/>
    <property type="match status" value="1"/>
</dbReference>
<dbReference type="Gene3D" id="3.30.70.260">
    <property type="match status" value="1"/>
</dbReference>
<dbReference type="Gene3D" id="3.40.50.300">
    <property type="entry name" value="P-loop containing nucleotide triphosphate hydrolases"/>
    <property type="match status" value="1"/>
</dbReference>
<dbReference type="InterPro" id="IPR003593">
    <property type="entry name" value="AAA+_ATPase"/>
</dbReference>
<dbReference type="InterPro" id="IPR003439">
    <property type="entry name" value="ABC_transporter-like_ATP-bd"/>
</dbReference>
<dbReference type="InterPro" id="IPR017871">
    <property type="entry name" value="ABC_transporter-like_CS"/>
</dbReference>
<dbReference type="InterPro" id="IPR045865">
    <property type="entry name" value="ACT-like_dom_sf"/>
</dbReference>
<dbReference type="InterPro" id="IPR041701">
    <property type="entry name" value="MetN_ABC"/>
</dbReference>
<dbReference type="InterPro" id="IPR050086">
    <property type="entry name" value="MetN_ABC_transporter-like"/>
</dbReference>
<dbReference type="InterPro" id="IPR018449">
    <property type="entry name" value="NIL_domain"/>
</dbReference>
<dbReference type="InterPro" id="IPR027417">
    <property type="entry name" value="P-loop_NTPase"/>
</dbReference>
<dbReference type="PANTHER" id="PTHR43166">
    <property type="entry name" value="AMINO ACID IMPORT ATP-BINDING PROTEIN"/>
    <property type="match status" value="1"/>
</dbReference>
<dbReference type="PANTHER" id="PTHR43166:SF30">
    <property type="entry name" value="METHIONINE IMPORT ATP-BINDING PROTEIN METN"/>
    <property type="match status" value="1"/>
</dbReference>
<dbReference type="Pfam" id="PF00005">
    <property type="entry name" value="ABC_tran"/>
    <property type="match status" value="1"/>
</dbReference>
<dbReference type="Pfam" id="PF09383">
    <property type="entry name" value="NIL"/>
    <property type="match status" value="1"/>
</dbReference>
<dbReference type="SMART" id="SM00382">
    <property type="entry name" value="AAA"/>
    <property type="match status" value="1"/>
</dbReference>
<dbReference type="SMART" id="SM00930">
    <property type="entry name" value="NIL"/>
    <property type="match status" value="1"/>
</dbReference>
<dbReference type="SUPFAM" id="SSF55021">
    <property type="entry name" value="ACT-like"/>
    <property type="match status" value="1"/>
</dbReference>
<dbReference type="SUPFAM" id="SSF52540">
    <property type="entry name" value="P-loop containing nucleoside triphosphate hydrolases"/>
    <property type="match status" value="1"/>
</dbReference>
<dbReference type="PROSITE" id="PS00211">
    <property type="entry name" value="ABC_TRANSPORTER_1"/>
    <property type="match status" value="1"/>
</dbReference>
<dbReference type="PROSITE" id="PS50893">
    <property type="entry name" value="ABC_TRANSPORTER_2"/>
    <property type="match status" value="1"/>
</dbReference>
<dbReference type="PROSITE" id="PS51264">
    <property type="entry name" value="METN"/>
    <property type="match status" value="1"/>
</dbReference>
<reference key="1">
    <citation type="journal article" date="2000" name="DNA Res.">
        <title>Complete genome structure of the nitrogen-fixing symbiotic bacterium Mesorhizobium loti.</title>
        <authorList>
            <person name="Kaneko T."/>
            <person name="Nakamura Y."/>
            <person name="Sato S."/>
            <person name="Asamizu E."/>
            <person name="Kato T."/>
            <person name="Sasamoto S."/>
            <person name="Watanabe A."/>
            <person name="Idesawa K."/>
            <person name="Ishikawa A."/>
            <person name="Kawashima K."/>
            <person name="Kimura T."/>
            <person name="Kishida Y."/>
            <person name="Kiyokawa C."/>
            <person name="Kohara M."/>
            <person name="Matsumoto M."/>
            <person name="Matsuno A."/>
            <person name="Mochizuki Y."/>
            <person name="Nakayama S."/>
            <person name="Nakazaki N."/>
            <person name="Shimpo S."/>
            <person name="Sugimoto M."/>
            <person name="Takeuchi C."/>
            <person name="Yamada M."/>
            <person name="Tabata S."/>
        </authorList>
    </citation>
    <scope>NUCLEOTIDE SEQUENCE [LARGE SCALE GENOMIC DNA]</scope>
    <source>
        <strain>LMG 29417 / CECT 9101 / MAFF 303099</strain>
    </source>
</reference>
<comment type="function">
    <text evidence="1">Part of the ABC transporter complex MetNIQ involved in methionine import. Responsible for energy coupling to the transport system.</text>
</comment>
<comment type="catalytic activity">
    <reaction evidence="1">
        <text>L-methionine(out) + ATP + H2O = L-methionine(in) + ADP + phosphate + H(+)</text>
        <dbReference type="Rhea" id="RHEA:29779"/>
        <dbReference type="ChEBI" id="CHEBI:15377"/>
        <dbReference type="ChEBI" id="CHEBI:15378"/>
        <dbReference type="ChEBI" id="CHEBI:30616"/>
        <dbReference type="ChEBI" id="CHEBI:43474"/>
        <dbReference type="ChEBI" id="CHEBI:57844"/>
        <dbReference type="ChEBI" id="CHEBI:456216"/>
        <dbReference type="EC" id="7.4.2.11"/>
    </reaction>
</comment>
<comment type="catalytic activity">
    <reaction evidence="1">
        <text>D-methionine(out) + ATP + H2O = D-methionine(in) + ADP + phosphate + H(+)</text>
        <dbReference type="Rhea" id="RHEA:29767"/>
        <dbReference type="ChEBI" id="CHEBI:15377"/>
        <dbReference type="ChEBI" id="CHEBI:15378"/>
        <dbReference type="ChEBI" id="CHEBI:30616"/>
        <dbReference type="ChEBI" id="CHEBI:43474"/>
        <dbReference type="ChEBI" id="CHEBI:57932"/>
        <dbReference type="ChEBI" id="CHEBI:456216"/>
        <dbReference type="EC" id="7.4.2.11"/>
    </reaction>
</comment>
<comment type="subunit">
    <text evidence="1">The complex is composed of two ATP-binding proteins (MetN), two transmembrane proteins (MetI) and a solute-binding protein (MetQ).</text>
</comment>
<comment type="subcellular location">
    <subcellularLocation>
        <location evidence="1">Cell inner membrane</location>
        <topology evidence="1">Peripheral membrane protein</topology>
    </subcellularLocation>
</comment>
<comment type="similarity">
    <text evidence="1">Belongs to the ABC transporter superfamily. Methionine importer (TC 3.A.1.24) family.</text>
</comment>
<sequence>MNQHITASQAIADPTHARPDASQDVVRLVDLKRRFGTTPAIDGISLTVRKGEILGIIGRSGAGKSTLIRCLNGLERPDSGEVFIEGREIGRLGERDLQPLRRRIGMIFQHFNLLSAKTVEDNVALPLKIEGRPKAERLARAAELLDLVGLSEKARAYPASLSGGQKQRVGIARALAARPALLLSDEATSALDPETTRSILALLKDINRQLGLTILLITHEMEVIRSIADRVAVIDAGRIVEQGPVWSVFADPQSDITKSLLGAIRPQLPAELAARLLPASGAETILRVDVAGDAASGPLLSDLATSVPGAFRLVHGGIDHIQQQPVGTLFLSIPGSDASHLAAVITFLKARQARVEVLGHVAHPV</sequence>
<protein>
    <recommendedName>
        <fullName evidence="1">Methionine import ATP-binding protein MetN</fullName>
        <ecNumber evidence="1">7.4.2.11</ecNumber>
    </recommendedName>
</protein>
<evidence type="ECO:0000255" key="1">
    <source>
        <dbReference type="HAMAP-Rule" id="MF_01719"/>
    </source>
</evidence>
<name>METN_RHILO</name>